<organism>
    <name type="scientific">Bos taurus</name>
    <name type="common">Bovine</name>
    <dbReference type="NCBI Taxonomy" id="9913"/>
    <lineage>
        <taxon>Eukaryota</taxon>
        <taxon>Metazoa</taxon>
        <taxon>Chordata</taxon>
        <taxon>Craniata</taxon>
        <taxon>Vertebrata</taxon>
        <taxon>Euteleostomi</taxon>
        <taxon>Mammalia</taxon>
        <taxon>Eutheria</taxon>
        <taxon>Laurasiatheria</taxon>
        <taxon>Artiodactyla</taxon>
        <taxon>Ruminantia</taxon>
        <taxon>Pecora</taxon>
        <taxon>Bovidae</taxon>
        <taxon>Bovinae</taxon>
        <taxon>Bos</taxon>
    </lineage>
</organism>
<comment type="function">
    <text evidence="1">Component of the 20S core proteasome complex involved in the proteolytic degradation of most intracellular proteins. This complex plays numerous essential roles within the cell by associating with different regulatory particles. Associated with two 19S regulatory particles, forms the 26S proteasome and thus participates in the ATP-dependent degradation of ubiquitinated proteins. The 26S proteasome plays a key role in the maintenance of protein homeostasis by removing misfolded or damaged proteins that could impair cellular functions, and by removing proteins whose functions are no longer required. Associated with the PA200 or PA28, the 20S proteasome mediates ubiquitin-independent protein degradation. This type of proteolysis is required in several pathways including spermatogenesis (20S-PA200 complex) or generation of a subset of MHC class I-presented antigenic peptides (20S-PA28 complex). Binds to the C-terminus of CDKN1A and thereby mediates its degradation. Negatively regulates the membrane trafficking of the cell-surface thromboxane A2 receptor (TBXA2R) isoform 2.</text>
</comment>
<comment type="subunit">
    <text evidence="1 3">The 26S proteasome consists of a 20S proteasome core and two 19S regulatory subunits. The 20S proteasome core is a barrel-shaped complex made of 28 subunits that are arranged in four stacked rings. The two outer rings are each formed by seven alpha subunits, and the two inner rings are formed by seven beta subunits. The proteolytic activity is exerted by three beta-subunits PSMB5, PSMB6 and PSMB7 (PubMed:12015144). Interacts with AURKB (By similarity). Interacts with CDKN1A (By similarity). Interacts with MDM2 and RB1 (By similarity). Interacts with the C-terminus of TBXA2R isoform 2 (By similarity). Interacts with DNAJB2 (By similarity).</text>
</comment>
<comment type="subcellular location">
    <subcellularLocation>
        <location evidence="1">Cytoplasm</location>
    </subcellularLocation>
    <subcellularLocation>
        <location evidence="1">Nucleus</location>
    </subcellularLocation>
    <text evidence="1">Translocated from the cytoplasm into the nucleus following interaction with AKIRIN2, which bridges the proteasome with the nuclear import receptor IPO9.</text>
</comment>
<comment type="similarity">
    <text evidence="2">Belongs to the peptidase T1A family.</text>
</comment>
<feature type="initiator methionine" description="Removed" evidence="1">
    <location>
        <position position="1"/>
    </location>
</feature>
<feature type="chain" id="PRO_0000240275" description="Proteasome subunit alpha type-3">
    <location>
        <begin position="2"/>
        <end position="255"/>
    </location>
</feature>
<feature type="modified residue" description="N-acetylserine" evidence="1">
    <location>
        <position position="2"/>
    </location>
</feature>
<feature type="modified residue" description="N6-acetyllysine" evidence="1">
    <location>
        <position position="57"/>
    </location>
</feature>
<feature type="modified residue" description="N6-acetyllysine" evidence="1">
    <location>
        <position position="206"/>
    </location>
</feature>
<feature type="modified residue" description="N6-acetyllysine" evidence="1">
    <location>
        <position position="230"/>
    </location>
</feature>
<feature type="modified residue" description="Phosphoserine" evidence="1">
    <location>
        <position position="243"/>
    </location>
</feature>
<feature type="modified residue" description="Phosphoserine" evidence="1">
    <location>
        <position position="250"/>
    </location>
</feature>
<feature type="helix" evidence="4">
    <location>
        <begin position="22"/>
        <end position="32"/>
    </location>
</feature>
<feature type="strand" evidence="4">
    <location>
        <begin position="37"/>
        <end position="41"/>
    </location>
</feature>
<feature type="strand" evidence="4">
    <location>
        <begin position="43"/>
        <end position="53"/>
    </location>
</feature>
<feature type="turn" evidence="4">
    <location>
        <begin position="61"/>
        <end position="64"/>
    </location>
</feature>
<feature type="strand" evidence="4">
    <location>
        <begin position="67"/>
        <end position="71"/>
    </location>
</feature>
<feature type="strand" evidence="4">
    <location>
        <begin position="74"/>
        <end position="80"/>
    </location>
</feature>
<feature type="helix" evidence="4">
    <location>
        <begin position="82"/>
        <end position="103"/>
    </location>
</feature>
<feature type="helix" evidence="4">
    <location>
        <begin position="109"/>
        <end position="121"/>
    </location>
</feature>
<feature type="helix" evidence="4">
    <location>
        <begin position="122"/>
        <end position="124"/>
    </location>
</feature>
<feature type="strand" evidence="4">
    <location>
        <begin position="125"/>
        <end position="129"/>
    </location>
</feature>
<feature type="strand" evidence="4">
    <location>
        <begin position="133"/>
        <end position="142"/>
    </location>
</feature>
<feature type="turn" evidence="4">
    <location>
        <begin position="143"/>
        <end position="145"/>
    </location>
</feature>
<feature type="strand" evidence="4">
    <location>
        <begin position="146"/>
        <end position="152"/>
    </location>
</feature>
<feature type="strand" evidence="4">
    <location>
        <begin position="158"/>
        <end position="167"/>
    </location>
</feature>
<feature type="helix" evidence="4">
    <location>
        <begin position="171"/>
        <end position="178"/>
    </location>
</feature>
<feature type="turn" evidence="4">
    <location>
        <begin position="182"/>
        <end position="184"/>
    </location>
</feature>
<feature type="helix" evidence="4">
    <location>
        <begin position="187"/>
        <end position="201"/>
    </location>
</feature>
<feature type="turn" evidence="4">
    <location>
        <begin position="204"/>
        <end position="206"/>
    </location>
</feature>
<feature type="strand" evidence="4">
    <location>
        <begin position="210"/>
        <end position="218"/>
    </location>
</feature>
<feature type="helix" evidence="4">
    <location>
        <begin position="219"/>
        <end position="221"/>
    </location>
</feature>
<feature type="helix" evidence="4">
    <location>
        <begin position="230"/>
        <end position="244"/>
    </location>
</feature>
<dbReference type="EMBL" id="BT021502">
    <property type="protein sequence ID" value="AAX46349.1"/>
    <property type="molecule type" value="mRNA"/>
</dbReference>
<dbReference type="EMBL" id="BC109554">
    <property type="protein sequence ID" value="AAI09555.1"/>
    <property type="molecule type" value="mRNA"/>
</dbReference>
<dbReference type="RefSeq" id="NP_001029407.1">
    <property type="nucleotide sequence ID" value="NM_001034235.1"/>
</dbReference>
<dbReference type="PDB" id="1IRU">
    <property type="method" value="X-ray"/>
    <property type="resolution" value="2.75 A"/>
    <property type="chains" value="G/U=2-255"/>
</dbReference>
<dbReference type="PDB" id="7DR6">
    <property type="method" value="EM"/>
    <property type="resolution" value="4.10 A"/>
    <property type="chains" value="R/d=1-255"/>
</dbReference>
<dbReference type="PDB" id="7DR7">
    <property type="method" value="EM"/>
    <property type="resolution" value="3.30 A"/>
    <property type="chains" value="D/R=1-255"/>
</dbReference>
<dbReference type="PDB" id="7DRW">
    <property type="method" value="EM"/>
    <property type="resolution" value="4.20 A"/>
    <property type="chains" value="G/d=1-255"/>
</dbReference>
<dbReference type="PDB" id="8AZK">
    <property type="method" value="EM"/>
    <property type="resolution" value="3.10 A"/>
    <property type="chains" value="G/U=2-255"/>
</dbReference>
<dbReference type="PDB" id="8FZ5">
    <property type="method" value="EM"/>
    <property type="resolution" value="2.23 A"/>
    <property type="chains" value="G/U=1-255"/>
</dbReference>
<dbReference type="PDB" id="8FZ6">
    <property type="method" value="EM"/>
    <property type="resolution" value="2.54 A"/>
    <property type="chains" value="G/U=1-255"/>
</dbReference>
<dbReference type="PDBsum" id="1IRU"/>
<dbReference type="PDBsum" id="7DR6"/>
<dbReference type="PDBsum" id="7DR7"/>
<dbReference type="PDBsum" id="7DRW"/>
<dbReference type="PDBsum" id="8AZK"/>
<dbReference type="PDBsum" id="8FZ5"/>
<dbReference type="PDBsum" id="8FZ6"/>
<dbReference type="EMDB" id="EMD-15767"/>
<dbReference type="EMDB" id="EMD-29603"/>
<dbReference type="EMDB" id="EMD-29604"/>
<dbReference type="EMDB" id="EMD-30824"/>
<dbReference type="EMDB" id="EMD-30825"/>
<dbReference type="EMDB" id="EMD-30828"/>
<dbReference type="SMR" id="Q58DU5"/>
<dbReference type="FunCoup" id="Q58DU5">
    <property type="interactions" value="3948"/>
</dbReference>
<dbReference type="IntAct" id="Q58DU5">
    <property type="interactions" value="1"/>
</dbReference>
<dbReference type="STRING" id="9913.ENSBTAP00000003636"/>
<dbReference type="PaxDb" id="9913-ENSBTAP00000003636"/>
<dbReference type="Ensembl" id="ENSBTAT00000003636.5">
    <property type="protein sequence ID" value="ENSBTAP00000003636.4"/>
    <property type="gene ID" value="ENSBTAG00000002808.6"/>
</dbReference>
<dbReference type="GeneID" id="505176"/>
<dbReference type="KEGG" id="bta:505176"/>
<dbReference type="CTD" id="5684"/>
<dbReference type="VEuPathDB" id="HostDB:ENSBTAG00000002808"/>
<dbReference type="VGNC" id="VGNC:33438">
    <property type="gene designation" value="PSMA3"/>
</dbReference>
<dbReference type="eggNOG" id="KOG0184">
    <property type="taxonomic scope" value="Eukaryota"/>
</dbReference>
<dbReference type="GeneTree" id="ENSGT00550000074912"/>
<dbReference type="HOGENOM" id="CLU_035750_0_0_1"/>
<dbReference type="InParanoid" id="Q58DU5"/>
<dbReference type="OMA" id="RVSMYMH"/>
<dbReference type="OrthoDB" id="40134at2759"/>
<dbReference type="TreeFam" id="TF106208"/>
<dbReference type="Reactome" id="R-BTA-1169091">
    <property type="pathway name" value="Activation of NF-kappaB in B cells"/>
</dbReference>
<dbReference type="Reactome" id="R-BTA-1234176">
    <property type="pathway name" value="Oxygen-dependent proline hydroxylation of Hypoxia-inducible Factor Alpha"/>
</dbReference>
<dbReference type="Reactome" id="R-BTA-1236978">
    <property type="pathway name" value="Cross-presentation of soluble exogenous antigens (endosomes)"/>
</dbReference>
<dbReference type="Reactome" id="R-BTA-174084">
    <property type="pathway name" value="Autodegradation of Cdh1 by Cdh1:APC/C"/>
</dbReference>
<dbReference type="Reactome" id="R-BTA-174154">
    <property type="pathway name" value="APC/C:Cdc20 mediated degradation of Securin"/>
</dbReference>
<dbReference type="Reactome" id="R-BTA-174178">
    <property type="pathway name" value="APC/C:Cdh1 mediated degradation of Cdc20 and other APC/C:Cdh1 targeted proteins in late mitosis/early G1"/>
</dbReference>
<dbReference type="Reactome" id="R-BTA-174184">
    <property type="pathway name" value="Cdc20:Phospho-APC/C mediated degradation of Cyclin A"/>
</dbReference>
<dbReference type="Reactome" id="R-BTA-187577">
    <property type="pathway name" value="SCF(Skp2)-mediated degradation of p27/p21"/>
</dbReference>
<dbReference type="Reactome" id="R-BTA-195253">
    <property type="pathway name" value="Degradation of beta-catenin by the destruction complex"/>
</dbReference>
<dbReference type="Reactome" id="R-BTA-202424">
    <property type="pathway name" value="Downstream TCR signaling"/>
</dbReference>
<dbReference type="Reactome" id="R-BTA-2467813">
    <property type="pathway name" value="Separation of Sister Chromatids"/>
</dbReference>
<dbReference type="Reactome" id="R-BTA-2871837">
    <property type="pathway name" value="FCERI mediated NF-kB activation"/>
</dbReference>
<dbReference type="Reactome" id="R-BTA-349425">
    <property type="pathway name" value="Autodegradation of the E3 ubiquitin ligase COP1"/>
</dbReference>
<dbReference type="Reactome" id="R-BTA-350562">
    <property type="pathway name" value="Regulation of ornithine decarboxylase (ODC)"/>
</dbReference>
<dbReference type="Reactome" id="R-BTA-382556">
    <property type="pathway name" value="ABC-family proteins mediated transport"/>
</dbReference>
<dbReference type="Reactome" id="R-BTA-450408">
    <property type="pathway name" value="AUF1 (hnRNP D0) binds and destabilizes mRNA"/>
</dbReference>
<dbReference type="Reactome" id="R-BTA-4608870">
    <property type="pathway name" value="Asymmetric localization of PCP proteins"/>
</dbReference>
<dbReference type="Reactome" id="R-BTA-4641257">
    <property type="pathway name" value="Degradation of AXIN"/>
</dbReference>
<dbReference type="Reactome" id="R-BTA-4641258">
    <property type="pathway name" value="Degradation of DVL"/>
</dbReference>
<dbReference type="Reactome" id="R-BTA-5358346">
    <property type="pathway name" value="Hedgehog ligand biogenesis"/>
</dbReference>
<dbReference type="Reactome" id="R-BTA-5607761">
    <property type="pathway name" value="Dectin-1 mediated noncanonical NF-kB signaling"/>
</dbReference>
<dbReference type="Reactome" id="R-BTA-5607764">
    <property type="pathway name" value="CLEC7A (Dectin-1) signaling"/>
</dbReference>
<dbReference type="Reactome" id="R-BTA-5610780">
    <property type="pathway name" value="Degradation of GLI1 by the proteasome"/>
</dbReference>
<dbReference type="Reactome" id="R-BTA-5610785">
    <property type="pathway name" value="GLI3 is processed to GLI3R by the proteasome"/>
</dbReference>
<dbReference type="Reactome" id="R-BTA-5632684">
    <property type="pathway name" value="Hedgehog 'on' state"/>
</dbReference>
<dbReference type="Reactome" id="R-BTA-5668541">
    <property type="pathway name" value="TNFR2 non-canonical NF-kB pathway"/>
</dbReference>
<dbReference type="Reactome" id="R-BTA-5676590">
    <property type="pathway name" value="NIK--&gt;noncanonical NF-kB signaling"/>
</dbReference>
<dbReference type="Reactome" id="R-BTA-5687128">
    <property type="pathway name" value="MAPK6/MAPK4 signaling"/>
</dbReference>
<dbReference type="Reactome" id="R-BTA-5689603">
    <property type="pathway name" value="UCH proteinases"/>
</dbReference>
<dbReference type="Reactome" id="R-BTA-5689880">
    <property type="pathway name" value="Ub-specific processing proteases"/>
</dbReference>
<dbReference type="Reactome" id="R-BTA-68867">
    <property type="pathway name" value="Assembly of the pre-replicative complex"/>
</dbReference>
<dbReference type="Reactome" id="R-BTA-68949">
    <property type="pathway name" value="Orc1 removal from chromatin"/>
</dbReference>
<dbReference type="Reactome" id="R-BTA-69017">
    <property type="pathway name" value="CDK-mediated phosphorylation and removal of Cdc6"/>
</dbReference>
<dbReference type="Reactome" id="R-BTA-69481">
    <property type="pathway name" value="G2/M Checkpoints"/>
</dbReference>
<dbReference type="Reactome" id="R-BTA-69601">
    <property type="pathway name" value="Ubiquitin Mediated Degradation of Phosphorylated Cdc25A"/>
</dbReference>
<dbReference type="Reactome" id="R-BTA-75815">
    <property type="pathway name" value="Ubiquitin-dependent degradation of Cyclin D"/>
</dbReference>
<dbReference type="Reactome" id="R-BTA-8852276">
    <property type="pathway name" value="The role of GTSE1 in G2/M progression after G2 checkpoint"/>
</dbReference>
<dbReference type="Reactome" id="R-BTA-8854050">
    <property type="pathway name" value="FBXL7 down-regulates AURKA during mitotic entry and in early mitosis"/>
</dbReference>
<dbReference type="Reactome" id="R-BTA-8939236">
    <property type="pathway name" value="RUNX1 regulates transcription of genes involved in differentiation of HSCs"/>
</dbReference>
<dbReference type="Reactome" id="R-BTA-8939902">
    <property type="pathway name" value="Regulation of RUNX2 expression and activity"/>
</dbReference>
<dbReference type="Reactome" id="R-BTA-8941858">
    <property type="pathway name" value="Regulation of RUNX3 expression and activity"/>
</dbReference>
<dbReference type="Reactome" id="R-BTA-8948751">
    <property type="pathway name" value="Regulation of PTEN stability and activity"/>
</dbReference>
<dbReference type="Reactome" id="R-BTA-8951664">
    <property type="pathway name" value="Neddylation"/>
</dbReference>
<dbReference type="Reactome" id="R-BTA-9020702">
    <property type="pathway name" value="Interleukin-1 signaling"/>
</dbReference>
<dbReference type="Reactome" id="R-BTA-9755511">
    <property type="pathway name" value="KEAP1-NFE2L2 pathway"/>
</dbReference>
<dbReference type="Reactome" id="R-BTA-9762114">
    <property type="pathway name" value="GSK3B and BTRC:CUL1-mediated-degradation of NFE2L2"/>
</dbReference>
<dbReference type="Reactome" id="R-BTA-983168">
    <property type="pathway name" value="Antigen processing: Ubiquitination &amp; Proteasome degradation"/>
</dbReference>
<dbReference type="Reactome" id="R-BTA-9907900">
    <property type="pathway name" value="Proteasome assembly"/>
</dbReference>
<dbReference type="EvolutionaryTrace" id="Q58DU5"/>
<dbReference type="Proteomes" id="UP000009136">
    <property type="component" value="Chromosome 10"/>
</dbReference>
<dbReference type="Bgee" id="ENSBTAG00000002808">
    <property type="expression patterns" value="Expressed in oocyte and 107 other cell types or tissues"/>
</dbReference>
<dbReference type="GO" id="GO:0005829">
    <property type="term" value="C:cytosol"/>
    <property type="evidence" value="ECO:0000304"/>
    <property type="project" value="Reactome"/>
</dbReference>
<dbReference type="GO" id="GO:0005634">
    <property type="term" value="C:nucleus"/>
    <property type="evidence" value="ECO:0000318"/>
    <property type="project" value="GO_Central"/>
</dbReference>
<dbReference type="GO" id="GO:0005839">
    <property type="term" value="C:proteasome core complex"/>
    <property type="evidence" value="ECO:0000250"/>
    <property type="project" value="UniProtKB"/>
</dbReference>
<dbReference type="GO" id="GO:0019773">
    <property type="term" value="C:proteasome core complex, alpha-subunit complex"/>
    <property type="evidence" value="ECO:0000250"/>
    <property type="project" value="UniProtKB"/>
</dbReference>
<dbReference type="GO" id="GO:0043161">
    <property type="term" value="P:proteasome-mediated ubiquitin-dependent protein catabolic process"/>
    <property type="evidence" value="ECO:0000318"/>
    <property type="project" value="GO_Central"/>
</dbReference>
<dbReference type="CDD" id="cd03751">
    <property type="entry name" value="proteasome_alpha_type_3"/>
    <property type="match status" value="1"/>
</dbReference>
<dbReference type="FunFam" id="3.60.20.10:FF:000077">
    <property type="entry name" value="Proteasome subunit alpha type-3"/>
    <property type="match status" value="1"/>
</dbReference>
<dbReference type="Gene3D" id="3.60.20.10">
    <property type="entry name" value="Glutamine Phosphoribosylpyrophosphate, subunit 1, domain 1"/>
    <property type="match status" value="1"/>
</dbReference>
<dbReference type="InterPro" id="IPR029055">
    <property type="entry name" value="Ntn_hydrolases_N"/>
</dbReference>
<dbReference type="InterPro" id="IPR050115">
    <property type="entry name" value="Proteasome_alpha"/>
</dbReference>
<dbReference type="InterPro" id="IPR023332">
    <property type="entry name" value="Proteasome_alpha-type"/>
</dbReference>
<dbReference type="InterPro" id="IPR000426">
    <property type="entry name" value="Proteasome_asu_N"/>
</dbReference>
<dbReference type="InterPro" id="IPR001353">
    <property type="entry name" value="Proteasome_sua/b"/>
</dbReference>
<dbReference type="PANTHER" id="PTHR11599">
    <property type="entry name" value="PROTEASOME SUBUNIT ALPHA/BETA"/>
    <property type="match status" value="1"/>
</dbReference>
<dbReference type="Pfam" id="PF00227">
    <property type="entry name" value="Proteasome"/>
    <property type="match status" value="1"/>
</dbReference>
<dbReference type="Pfam" id="PF10584">
    <property type="entry name" value="Proteasome_A_N"/>
    <property type="match status" value="1"/>
</dbReference>
<dbReference type="SMART" id="SM00948">
    <property type="entry name" value="Proteasome_A_N"/>
    <property type="match status" value="1"/>
</dbReference>
<dbReference type="SUPFAM" id="SSF56235">
    <property type="entry name" value="N-terminal nucleophile aminohydrolases (Ntn hydrolases)"/>
    <property type="match status" value="1"/>
</dbReference>
<dbReference type="PROSITE" id="PS00388">
    <property type="entry name" value="PROTEASOME_ALPHA_1"/>
    <property type="match status" value="1"/>
</dbReference>
<dbReference type="PROSITE" id="PS51475">
    <property type="entry name" value="PROTEASOME_ALPHA_2"/>
    <property type="match status" value="1"/>
</dbReference>
<accession>Q58DU5</accession>
<name>PSA3_BOVIN</name>
<keyword id="KW-0002">3D-structure</keyword>
<keyword id="KW-0007">Acetylation</keyword>
<keyword id="KW-0963">Cytoplasm</keyword>
<keyword id="KW-0539">Nucleus</keyword>
<keyword id="KW-0597">Phosphoprotein</keyword>
<keyword id="KW-0647">Proteasome</keyword>
<keyword id="KW-1185">Reference proteome</keyword>
<gene>
    <name type="primary">PSMA3</name>
</gene>
<evidence type="ECO:0000250" key="1">
    <source>
        <dbReference type="UniProtKB" id="P25788"/>
    </source>
</evidence>
<evidence type="ECO:0000255" key="2">
    <source>
        <dbReference type="PROSITE-ProRule" id="PRU00808"/>
    </source>
</evidence>
<evidence type="ECO:0000269" key="3">
    <source>
    </source>
</evidence>
<evidence type="ECO:0007829" key="4">
    <source>
        <dbReference type="PDB" id="8FZ5"/>
    </source>
</evidence>
<proteinExistence type="evidence at protein level"/>
<sequence>MSSIGTGYDLSASTFSPDGRVFQVEYAMKAVENSSTAIGIRCKDGVVFGVEKLVLSKLYEEGSNKRLFNVDRHVGMAVAGLLADARSLADIAREEASNFRSNFGYNIPLKHLADRVAMYVHAYTLYSAVRPFGCSFMLGSYSVNDGAQLYMIDPSGVSYGYWGCAIGKARQAAKTEIEKLQMKEMTCRDVVKEVAKIIYIVHDEVKDKAFELELSWVGEITNGRHEIVPKDVREEAEKYAKESLKEEDESDDDNM</sequence>
<reference key="1">
    <citation type="journal article" date="2005" name="BMC Genomics">
        <title>Characterization of 954 bovine full-CDS cDNA sequences.</title>
        <authorList>
            <person name="Harhay G.P."/>
            <person name="Sonstegard T.S."/>
            <person name="Keele J.W."/>
            <person name="Heaton M.P."/>
            <person name="Clawson M.L."/>
            <person name="Snelling W.M."/>
            <person name="Wiedmann R.T."/>
            <person name="Van Tassell C.P."/>
            <person name="Smith T.P.L."/>
        </authorList>
    </citation>
    <scope>NUCLEOTIDE SEQUENCE [LARGE SCALE MRNA]</scope>
</reference>
<reference key="2">
    <citation type="submission" date="2005-11" db="EMBL/GenBank/DDBJ databases">
        <authorList>
            <consortium name="NIH - Mammalian Gene Collection (MGC) project"/>
        </authorList>
    </citation>
    <scope>NUCLEOTIDE SEQUENCE [LARGE SCALE MRNA]</scope>
    <source>
        <strain>Crossbred X Angus</strain>
        <tissue>Liver</tissue>
    </source>
</reference>
<reference key="3">
    <citation type="journal article" date="2002" name="Structure">
        <title>The structure of the mammalian 20S proteasome at 2.75 A resolution.</title>
        <authorList>
            <person name="Unno M."/>
            <person name="Mizushima T."/>
            <person name="Morimoto Y."/>
            <person name="Tomisugi Y."/>
            <person name="Tanaka K."/>
            <person name="Yasuoka N."/>
            <person name="Tsukihara T."/>
        </authorList>
    </citation>
    <scope>X-RAY CRYSTALLOGRAPHY (2.75 ANGSTROMS) OF COMPLEX WITH THE 20S PROTEASOME</scope>
</reference>
<protein>
    <recommendedName>
        <fullName>Proteasome subunit alpha type-3</fullName>
    </recommendedName>
</protein>